<proteinExistence type="inferred from homology"/>
<name>SNPF_DROPS</name>
<reference key="1">
    <citation type="journal article" date="2005" name="Genome Res.">
        <title>Comparative genome sequencing of Drosophila pseudoobscura: chromosomal, gene, and cis-element evolution.</title>
        <authorList>
            <person name="Richards S."/>
            <person name="Liu Y."/>
            <person name="Bettencourt B.R."/>
            <person name="Hradecky P."/>
            <person name="Letovsky S."/>
            <person name="Nielsen R."/>
            <person name="Thornton K."/>
            <person name="Hubisz M.J."/>
            <person name="Chen R."/>
            <person name="Meisel R.P."/>
            <person name="Couronne O."/>
            <person name="Hua S."/>
            <person name="Smith M.A."/>
            <person name="Zhang P."/>
            <person name="Liu J."/>
            <person name="Bussemaker H.J."/>
            <person name="van Batenburg M.F."/>
            <person name="Howells S.L."/>
            <person name="Scherer S.E."/>
            <person name="Sodergren E."/>
            <person name="Matthews B.B."/>
            <person name="Crosby M.A."/>
            <person name="Schroeder A.J."/>
            <person name="Ortiz-Barrientos D."/>
            <person name="Rives C.M."/>
            <person name="Metzker M.L."/>
            <person name="Muzny D.M."/>
            <person name="Scott G."/>
            <person name="Steffen D."/>
            <person name="Wheeler D.A."/>
            <person name="Worley K.C."/>
            <person name="Havlak P."/>
            <person name="Durbin K.J."/>
            <person name="Egan A."/>
            <person name="Gill R."/>
            <person name="Hume J."/>
            <person name="Morgan M.B."/>
            <person name="Miner G."/>
            <person name="Hamilton C."/>
            <person name="Huang Y."/>
            <person name="Waldron L."/>
            <person name="Verduzco D."/>
            <person name="Clerc-Blankenburg K.P."/>
            <person name="Dubchak I."/>
            <person name="Noor M.A.F."/>
            <person name="Anderson W."/>
            <person name="White K.P."/>
            <person name="Clark A.G."/>
            <person name="Schaeffer S.W."/>
            <person name="Gelbart W.M."/>
            <person name="Weinstock G.M."/>
            <person name="Gibbs R.A."/>
        </authorList>
    </citation>
    <scope>NUCLEOTIDE SEQUENCE [LARGE SCALE GENOMIC DNA]</scope>
    <source>
        <strain>MV2-25 / Tucson 14011-0121.94</strain>
    </source>
</reference>
<organism>
    <name type="scientific">Drosophila pseudoobscura pseudoobscura</name>
    <name type="common">Fruit fly</name>
    <dbReference type="NCBI Taxonomy" id="46245"/>
    <lineage>
        <taxon>Eukaryota</taxon>
        <taxon>Metazoa</taxon>
        <taxon>Ecdysozoa</taxon>
        <taxon>Arthropoda</taxon>
        <taxon>Hexapoda</taxon>
        <taxon>Insecta</taxon>
        <taxon>Pterygota</taxon>
        <taxon>Neoptera</taxon>
        <taxon>Endopterygota</taxon>
        <taxon>Diptera</taxon>
        <taxon>Brachycera</taxon>
        <taxon>Muscomorpha</taxon>
        <taxon>Ephydroidea</taxon>
        <taxon>Drosophilidae</taxon>
        <taxon>Drosophila</taxon>
        <taxon>Sophophora</taxon>
    </lineage>
</organism>
<dbReference type="EMBL" id="CH379061">
    <property type="protein sequence ID" value="EAL33172.2"/>
    <property type="status" value="ALT_SEQ"/>
    <property type="molecule type" value="Genomic_DNA"/>
</dbReference>
<dbReference type="FunCoup" id="Q29KK2">
    <property type="interactions" value="11"/>
</dbReference>
<dbReference type="STRING" id="46245.Q29KK2"/>
<dbReference type="eggNOG" id="ENOG502SEMZ">
    <property type="taxonomic scope" value="Eukaryota"/>
</dbReference>
<dbReference type="InParanoid" id="Q29KK2"/>
<dbReference type="Proteomes" id="UP000001819">
    <property type="component" value="Unplaced"/>
</dbReference>
<dbReference type="GO" id="GO:0005576">
    <property type="term" value="C:extracellular region"/>
    <property type="evidence" value="ECO:0000250"/>
    <property type="project" value="UniProtKB"/>
</dbReference>
<dbReference type="GO" id="GO:0005184">
    <property type="term" value="F:neuropeptide hormone activity"/>
    <property type="evidence" value="ECO:0000250"/>
    <property type="project" value="UniProtKB"/>
</dbReference>
<dbReference type="GO" id="GO:0007218">
    <property type="term" value="P:neuropeptide signaling pathway"/>
    <property type="evidence" value="ECO:0000250"/>
    <property type="project" value="UniProtKB"/>
</dbReference>
<dbReference type="GO" id="GO:0040014">
    <property type="term" value="P:regulation of multicellular organism growth"/>
    <property type="evidence" value="ECO:0000250"/>
    <property type="project" value="UniProtKB"/>
</dbReference>
<dbReference type="GO" id="GO:0032095">
    <property type="term" value="P:regulation of response to food"/>
    <property type="evidence" value="ECO:0000250"/>
    <property type="project" value="UniProtKB"/>
</dbReference>
<gene>
    <name evidence="2" type="primary">sNPF</name>
    <name type="ORF">GA12665</name>
</gene>
<feature type="signal peptide" evidence="3">
    <location>
        <begin position="1"/>
        <end position="32"/>
    </location>
</feature>
<feature type="propeptide" id="PRO_0000284743" evidence="2">
    <location>
        <begin position="33"/>
        <end position="87"/>
    </location>
</feature>
<feature type="peptide" id="PRO_0000284744" description="RLRF peptide 1" evidence="2">
    <location>
        <begin position="90"/>
        <end position="100"/>
    </location>
</feature>
<feature type="peptide" id="PRO_0000284745" description="sNPF-associated peptide" evidence="2">
    <location>
        <begin position="103"/>
        <end position="113"/>
    </location>
</feature>
<feature type="peptide" id="PRO_0000284746" description="sNPF peptide 2" evidence="2">
    <location>
        <begin position="116"/>
        <end position="125"/>
    </location>
</feature>
<feature type="peptide" id="PRO_0000284747" description="RLRF peptide 2" evidence="2">
    <location>
        <begin position="127"/>
        <end position="134"/>
    </location>
</feature>
<feature type="propeptide" id="PRO_0000284748" evidence="2">
    <location>
        <begin position="138"/>
        <end position="290"/>
    </location>
</feature>
<feature type="region of interest" description="Disordered" evidence="4">
    <location>
        <begin position="238"/>
        <end position="290"/>
    </location>
</feature>
<feature type="compositionally biased region" description="Acidic residues" evidence="4">
    <location>
        <begin position="244"/>
        <end position="257"/>
    </location>
</feature>
<feature type="compositionally biased region" description="Polar residues" evidence="4">
    <location>
        <begin position="281"/>
        <end position="290"/>
    </location>
</feature>
<feature type="modified residue" description="Phenylalanine amide" evidence="1">
    <location>
        <position position="100"/>
    </location>
</feature>
<feature type="modified residue" description="Phenylalanine amide" evidence="1">
    <location>
        <position position="134"/>
    </location>
</feature>
<accession>Q29KK2</accession>
<protein>
    <recommendedName>
        <fullName>Short neuropeptide F</fullName>
    </recommendedName>
    <component>
        <recommendedName>
            <fullName>sNPF-associated peptide</fullName>
        </recommendedName>
    </component>
    <component>
        <recommendedName>
            <fullName>sNPF peptide 2</fullName>
        </recommendedName>
    </component>
    <component>
        <recommendedName>
            <fullName>RLRF peptide 1</fullName>
        </recommendedName>
    </component>
    <component>
        <recommendedName>
            <fullName>RLRF peptide 2</fullName>
        </recommendedName>
    </component>
</protein>
<keyword id="KW-0027">Amidation</keyword>
<keyword id="KW-0165">Cleavage on pair of basic residues</keyword>
<keyword id="KW-0527">Neuropeptide</keyword>
<keyword id="KW-1185">Reference proteome</keyword>
<keyword id="KW-0964">Secreted</keyword>
<keyword id="KW-0732">Signal</keyword>
<evidence type="ECO:0000250" key="1"/>
<evidence type="ECO:0000250" key="2">
    <source>
        <dbReference type="UniProtKB" id="Q9VIQ0"/>
    </source>
</evidence>
<evidence type="ECO:0000255" key="3"/>
<evidence type="ECO:0000256" key="4">
    <source>
        <dbReference type="SAM" id="MobiDB-lite"/>
    </source>
</evidence>
<evidence type="ECO:0000305" key="5"/>
<comment type="function">
    <text evidence="2">Plays a role in controlling food intake and regulating body size.</text>
</comment>
<comment type="subcellular location">
    <subcellularLocation>
        <location evidence="1">Secreted</location>
    </subcellularLocation>
</comment>
<comment type="similarity">
    <text evidence="3">Belongs to the NPY family.</text>
</comment>
<comment type="sequence caution" evidence="5">
    <conflict type="erroneous gene model prediction">
        <sequence resource="EMBL-CDS" id="EAL33172"/>
    </conflict>
</comment>
<sequence length="290" mass="33281">MFRFNPQLSHGCALALICCLLNLLMMHQPTNAELSPVVQGEFFLPILPDDHPPNTDTSFGGPISNLYDNLLQREYAGPVVFPNHQVERKAQRSPSLRLRFGRSDPDMLNNIVEKRWFGDVNQKPIRSPSLRLRFGRRDPTLPQMRRTAYDDLLERELTLNNQQQQQLGDTADDLSADYDGLYERVVRKPQRLRWGRSVPQFEATIGDNDQLYNSLWNSEKMRRMLLALQQYEAAPGHVAGYANDGDDTEAQLDEDTSEFQREARKPMRLRWGRSTGKAPQIETSSIAPKN</sequence>